<proteinExistence type="evidence at transcript level"/>
<keyword id="KW-0050">Antiport</keyword>
<keyword id="KW-0472">Membrane</keyword>
<keyword id="KW-1185">Reference proteome</keyword>
<keyword id="KW-0762">Sugar transport</keyword>
<keyword id="KW-0812">Transmembrane</keyword>
<keyword id="KW-1133">Transmembrane helix</keyword>
<keyword id="KW-0813">Transport</keyword>
<comment type="function">
    <text evidence="1">Sugar transporter involved in the transport of nucleotide-sugars from cytoplasm into the Golgi and/or the endoplasmic reticulum.</text>
</comment>
<comment type="subcellular location">
    <subcellularLocation>
        <location evidence="4">Membrane</location>
        <topology evidence="4">Multi-pass membrane protein</topology>
    </subcellularLocation>
</comment>
<comment type="similarity">
    <text evidence="4">Belongs to the nucleotide-sugar transporter family. UDP-galactose:UMP antiporter (TC 2.A.7.11) subfamily.</text>
</comment>
<comment type="sequence caution" evidence="4">
    <conflict type="erroneous gene model prediction">
        <sequence resource="EMBL-CDS" id="BAB09511"/>
    </conflict>
</comment>
<sequence>MAEPELVNGGVKENKLWKGVFAVSGIMSTLVIYGVLQEKIMRVPYGVNKEFFKHSLFLVFCNRLTTSAVSAGALLASKKVLDPVAPVYKYCLISVTNILTTTCQYEALKYVSFPVQTLAKCAKMIPVMVWGTLIMQKKYKGFDYLVAFLVTLGCSVFILFPAGDDVSPYNKGRENTVWGVSLMAGYLGFDGFTSTFQDKLFKGYNMEIHNQIFYTTLCSCVLSFTGLILQGHLLPAVDFVSLHRDCLLDIALLSTVATASQFFISYTIRTFGALTFAAIMTTRQLASIMLSCIWFSHPLSWEQCIGSVIVFGSLYAKNLLNNKKNSQTQPPPPELPQYEKVESS</sequence>
<gene>
    <name evidence="4" type="primary">UTR5B</name>
    <name evidence="5" type="ordered locus">At5g59740</name>
    <name evidence="6" type="ORF">MTH12.11</name>
</gene>
<evidence type="ECO:0000250" key="1"/>
<evidence type="ECO:0000255" key="2"/>
<evidence type="ECO:0000256" key="3">
    <source>
        <dbReference type="SAM" id="MobiDB-lite"/>
    </source>
</evidence>
<evidence type="ECO:0000305" key="4"/>
<evidence type="ECO:0000312" key="5">
    <source>
        <dbReference type="Araport" id="AT5G59740"/>
    </source>
</evidence>
<evidence type="ECO:0000312" key="6">
    <source>
        <dbReference type="EMBL" id="BAB09511.1"/>
    </source>
</evidence>
<feature type="chain" id="PRO_0000415965" description="UDP-galactose/UDP-glucose transporter 5B">
    <location>
        <begin position="1"/>
        <end position="344"/>
    </location>
</feature>
<feature type="transmembrane region" description="Helical" evidence="2">
    <location>
        <begin position="16"/>
        <end position="36"/>
    </location>
</feature>
<feature type="transmembrane region" description="Helical" evidence="2">
    <location>
        <begin position="56"/>
        <end position="76"/>
    </location>
</feature>
<feature type="transmembrane region" description="Helical" evidence="2">
    <location>
        <begin position="115"/>
        <end position="135"/>
    </location>
</feature>
<feature type="transmembrane region" description="Helical" evidence="2">
    <location>
        <begin position="142"/>
        <end position="162"/>
    </location>
</feature>
<feature type="transmembrane region" description="Helical" evidence="2">
    <location>
        <begin position="176"/>
        <end position="196"/>
    </location>
</feature>
<feature type="transmembrane region" description="Helical" evidence="2">
    <location>
        <begin position="220"/>
        <end position="240"/>
    </location>
</feature>
<feature type="transmembrane region" description="Helical" evidence="2">
    <location>
        <begin position="246"/>
        <end position="266"/>
    </location>
</feature>
<feature type="transmembrane region" description="Helical" evidence="2">
    <location>
        <begin position="292"/>
        <end position="312"/>
    </location>
</feature>
<feature type="region of interest" description="Disordered" evidence="3">
    <location>
        <begin position="324"/>
        <end position="344"/>
    </location>
</feature>
<feature type="sequence conflict" description="In Ref. 3; BAD43222/BAD43224." evidence="4" ref="3">
    <original>N</original>
    <variation>S</variation>
    <location>
        <position position="322"/>
    </location>
</feature>
<name>UTR5B_ARATH</name>
<reference key="1">
    <citation type="journal article" date="1997" name="DNA Res.">
        <title>Structural analysis of Arabidopsis thaliana chromosome 5. II. Sequence features of the regions of 1,044,062 bp covered by thirteen physically assigned P1 clones.</title>
        <authorList>
            <person name="Kotani H."/>
            <person name="Nakamura Y."/>
            <person name="Sato S."/>
            <person name="Kaneko T."/>
            <person name="Asamizu E."/>
            <person name="Miyajima N."/>
            <person name="Tabata S."/>
        </authorList>
    </citation>
    <scope>NUCLEOTIDE SEQUENCE [LARGE SCALE GENOMIC DNA]</scope>
    <source>
        <strain>cv. Columbia</strain>
    </source>
</reference>
<reference key="2">
    <citation type="journal article" date="2017" name="Plant J.">
        <title>Araport11: a complete reannotation of the Arabidopsis thaliana reference genome.</title>
        <authorList>
            <person name="Cheng C.Y."/>
            <person name="Krishnakumar V."/>
            <person name="Chan A.P."/>
            <person name="Thibaud-Nissen F."/>
            <person name="Schobel S."/>
            <person name="Town C.D."/>
        </authorList>
    </citation>
    <scope>GENOME REANNOTATION</scope>
    <source>
        <strain>cv. Columbia</strain>
    </source>
</reference>
<reference key="3">
    <citation type="submission" date="2004-09" db="EMBL/GenBank/DDBJ databases">
        <title>Large-scale analysis of RIKEN Arabidopsis full-length (RAFL) cDNAs.</title>
        <authorList>
            <person name="Totoki Y."/>
            <person name="Seki M."/>
            <person name="Ishida J."/>
            <person name="Nakajima M."/>
            <person name="Enju A."/>
            <person name="Kamiya A."/>
            <person name="Narusaka M."/>
            <person name="Shin-i T."/>
            <person name="Nakagawa M."/>
            <person name="Sakamoto N."/>
            <person name="Oishi K."/>
            <person name="Kohara Y."/>
            <person name="Kobayashi M."/>
            <person name="Toyoda A."/>
            <person name="Sakaki Y."/>
            <person name="Sakurai T."/>
            <person name="Iida K."/>
            <person name="Akiyama K."/>
            <person name="Satou M."/>
            <person name="Toyoda T."/>
            <person name="Konagaya A."/>
            <person name="Carninci P."/>
            <person name="Kawai J."/>
            <person name="Hayashizaki Y."/>
            <person name="Shinozaki K."/>
        </authorList>
    </citation>
    <scope>NUCLEOTIDE SEQUENCE [LARGE SCALE MRNA]</scope>
    <source>
        <strain>cv. Columbia</strain>
    </source>
</reference>
<reference key="4">
    <citation type="submission" date="2004-03" db="EMBL/GenBank/DDBJ databases">
        <title>Arabidopsis ORF clones.</title>
        <authorList>
            <person name="Cheuk R.F."/>
            <person name="Chen H."/>
            <person name="Kim C.J."/>
            <person name="Shinn P."/>
            <person name="Carninci P."/>
            <person name="Hayashizaki Y."/>
            <person name="Ishida J."/>
            <person name="Kamiya A."/>
            <person name="Kawai J."/>
            <person name="Narusaka M."/>
            <person name="Sakurai T."/>
            <person name="Satou M."/>
            <person name="Seki M."/>
            <person name="Shinozaki K."/>
            <person name="Ecker J.R."/>
        </authorList>
    </citation>
    <scope>NUCLEOTIDE SEQUENCE [LARGE SCALE MRNA]</scope>
    <source>
        <strain>cv. Columbia</strain>
    </source>
</reference>
<reference key="5">
    <citation type="journal article" date="2002" name="J. Biol. Chem.">
        <title>Transport of UDP-galactose in plants. Identification and functional characterization of AtUTr1, an Arabidopsis thaliana UDP-galactose/UDP-glucose transporter.</title>
        <authorList>
            <person name="Norambuena L."/>
            <person name="Marchant L."/>
            <person name="Berninsone P."/>
            <person name="Hirschberg C.B."/>
            <person name="Silva H."/>
            <person name="Orellana A."/>
        </authorList>
    </citation>
    <scope>GENE FAMILY</scope>
    <scope>NOMENCLATURE</scope>
</reference>
<reference key="6">
    <citation type="journal article" date="2005" name="Glycobiology">
        <title>Molecular cloning of two Arabidopsis UDP-galactose transporters by complementation of a deficient Chinese hamster ovary cell line.</title>
        <authorList>
            <person name="Bakker H."/>
            <person name="Routier F."/>
            <person name="Oelmann S."/>
            <person name="Jordi W."/>
            <person name="Lommen A."/>
            <person name="Gerardy-Schahn R."/>
            <person name="Bosch D."/>
        </authorList>
    </citation>
    <scope>GENE FAMILY</scope>
    <source>
        <strain>cv. Columbia</strain>
    </source>
</reference>
<reference key="7">
    <citation type="journal article" date="2014" name="Proc. Natl. Acad. Sci. U.S.A.">
        <title>The Golgi localized bifunctional UDP-rhamnose/UDP-galactose transporter family of Arabidopsis.</title>
        <authorList>
            <person name="Rautengarten C."/>
            <person name="Ebert B."/>
            <person name="Moreno I."/>
            <person name="Temple H."/>
            <person name="Herter T."/>
            <person name="Link B."/>
            <person name="Donas-Cofre D."/>
            <person name="Moreno A."/>
            <person name="Saez-Aguayo S."/>
            <person name="Blanco F."/>
            <person name="Mortimer J.C."/>
            <person name="Schultink A."/>
            <person name="Reiter W.D."/>
            <person name="Dupree P."/>
            <person name="Pauly M."/>
            <person name="Heazlewood J.L."/>
            <person name="Scheller H.V."/>
            <person name="Orellana A."/>
        </authorList>
    </citation>
    <scope>GENE FAMILY</scope>
</reference>
<dbReference type="EMBL" id="AB006705">
    <property type="protein sequence ID" value="BAB09511.1"/>
    <property type="status" value="ALT_SEQ"/>
    <property type="molecule type" value="Genomic_DNA"/>
</dbReference>
<dbReference type="EMBL" id="CP002688">
    <property type="protein sequence ID" value="AED97226.1"/>
    <property type="molecule type" value="Genomic_DNA"/>
</dbReference>
<dbReference type="EMBL" id="AK175459">
    <property type="protein sequence ID" value="BAD43222.1"/>
    <property type="molecule type" value="mRNA"/>
</dbReference>
<dbReference type="EMBL" id="AK175461">
    <property type="protein sequence ID" value="BAD43224.1"/>
    <property type="molecule type" value="mRNA"/>
</dbReference>
<dbReference type="EMBL" id="BT011744">
    <property type="protein sequence ID" value="AAS49107.1"/>
    <property type="molecule type" value="mRNA"/>
</dbReference>
<dbReference type="RefSeq" id="NP_200782.1">
    <property type="nucleotide sequence ID" value="NM_125366.5"/>
</dbReference>
<dbReference type="SMR" id="Q6NMB6"/>
<dbReference type="BioGRID" id="21339">
    <property type="interactions" value="7"/>
</dbReference>
<dbReference type="FunCoup" id="Q6NMB6">
    <property type="interactions" value="2321"/>
</dbReference>
<dbReference type="IntAct" id="Q6NMB6">
    <property type="interactions" value="7"/>
</dbReference>
<dbReference type="STRING" id="3702.Q6NMB6"/>
<dbReference type="PaxDb" id="3702-AT5G59740.1"/>
<dbReference type="ProteomicsDB" id="228606"/>
<dbReference type="EnsemblPlants" id="AT5G59740.1">
    <property type="protein sequence ID" value="AT5G59740.1"/>
    <property type="gene ID" value="AT5G59740"/>
</dbReference>
<dbReference type="GeneID" id="836095"/>
<dbReference type="Gramene" id="AT5G59740.1">
    <property type="protein sequence ID" value="AT5G59740.1"/>
    <property type="gene ID" value="AT5G59740"/>
</dbReference>
<dbReference type="KEGG" id="ath:AT5G59740"/>
<dbReference type="Araport" id="AT5G59740"/>
<dbReference type="TAIR" id="AT5G59740"/>
<dbReference type="eggNOG" id="KOG1581">
    <property type="taxonomic scope" value="Eukaryota"/>
</dbReference>
<dbReference type="HOGENOM" id="CLU_036019_3_0_1"/>
<dbReference type="InParanoid" id="Q6NMB6"/>
<dbReference type="OMA" id="KIMTQHY"/>
<dbReference type="PhylomeDB" id="Q6NMB6"/>
<dbReference type="PRO" id="PR:Q6NMB6"/>
<dbReference type="Proteomes" id="UP000006548">
    <property type="component" value="Chromosome 5"/>
</dbReference>
<dbReference type="ExpressionAtlas" id="Q6NMB6">
    <property type="expression patterns" value="baseline and differential"/>
</dbReference>
<dbReference type="GO" id="GO:0016020">
    <property type="term" value="C:membrane"/>
    <property type="evidence" value="ECO:0007669"/>
    <property type="project" value="UniProtKB-SubCell"/>
</dbReference>
<dbReference type="GO" id="GO:0015297">
    <property type="term" value="F:antiporter activity"/>
    <property type="evidence" value="ECO:0007669"/>
    <property type="project" value="UniProtKB-KW"/>
</dbReference>
<dbReference type="InterPro" id="IPR013657">
    <property type="entry name" value="SCL35B1-4/HUT1"/>
</dbReference>
<dbReference type="PANTHER" id="PTHR10778:SF13">
    <property type="entry name" value="ADENOSINE 3'-PHOSPHO 5'-PHOSPHOSULFATE TRANSPORTER 1"/>
    <property type="match status" value="1"/>
</dbReference>
<dbReference type="PANTHER" id="PTHR10778">
    <property type="entry name" value="SOLUTE CARRIER FAMILY 35 MEMBER B"/>
    <property type="match status" value="1"/>
</dbReference>
<dbReference type="Pfam" id="PF08449">
    <property type="entry name" value="UAA"/>
    <property type="match status" value="1"/>
</dbReference>
<dbReference type="SUPFAM" id="SSF103481">
    <property type="entry name" value="Multidrug resistance efflux transporter EmrE"/>
    <property type="match status" value="1"/>
</dbReference>
<organism>
    <name type="scientific">Arabidopsis thaliana</name>
    <name type="common">Mouse-ear cress</name>
    <dbReference type="NCBI Taxonomy" id="3702"/>
    <lineage>
        <taxon>Eukaryota</taxon>
        <taxon>Viridiplantae</taxon>
        <taxon>Streptophyta</taxon>
        <taxon>Embryophyta</taxon>
        <taxon>Tracheophyta</taxon>
        <taxon>Spermatophyta</taxon>
        <taxon>Magnoliopsida</taxon>
        <taxon>eudicotyledons</taxon>
        <taxon>Gunneridae</taxon>
        <taxon>Pentapetalae</taxon>
        <taxon>rosids</taxon>
        <taxon>malvids</taxon>
        <taxon>Brassicales</taxon>
        <taxon>Brassicaceae</taxon>
        <taxon>Camelineae</taxon>
        <taxon>Arabidopsis</taxon>
    </lineage>
</organism>
<accession>Q6NMB6</accession>
<accession>Q682A6</accession>
<accession>Q9FN90</accession>
<protein>
    <recommendedName>
        <fullName evidence="4">UDP-galactose/UDP-glucose transporter 5B</fullName>
        <shortName evidence="4">AtUTr5B</shortName>
    </recommendedName>
</protein>